<name>RIMM_DINSH</name>
<comment type="function">
    <text evidence="1">An accessory protein needed during the final step in the assembly of 30S ribosomal subunit, possibly for assembly of the head region. Essential for efficient processing of 16S rRNA. May be needed both before and after RbfA during the maturation of 16S rRNA. It has affinity for free ribosomal 30S subunits but not for 70S ribosomes.</text>
</comment>
<comment type="subunit">
    <text evidence="1">Binds ribosomal protein uS19.</text>
</comment>
<comment type="subcellular location">
    <subcellularLocation>
        <location evidence="1">Cytoplasm</location>
    </subcellularLocation>
</comment>
<comment type="domain">
    <text evidence="1">The PRC barrel domain binds ribosomal protein uS19.</text>
</comment>
<comment type="similarity">
    <text evidence="1">Belongs to the RimM family.</text>
</comment>
<sequence length="166" mass="17528">MSDRVCVGAVAGAFGVRGELRIKSFCAVPEDIASYNPLSFEDGRETTLRLTGQIKNGLSGRLTGVSNKEAADALRGARLYAPRDRLPRLPDDEFYHADLIGLAVHDTGGTLLGKVAAVHNHGAGDLLELRGPGLKGSVLLPFTRAVVPTVDLDAGRIVADPPEGLF</sequence>
<feature type="chain" id="PRO_0000351755" description="Ribosome maturation factor RimM">
    <location>
        <begin position="1"/>
        <end position="166"/>
    </location>
</feature>
<feature type="domain" description="PRC barrel" evidence="1">
    <location>
        <begin position="91"/>
        <end position="165"/>
    </location>
</feature>
<dbReference type="EMBL" id="CP000830">
    <property type="protein sequence ID" value="ABV92093.1"/>
    <property type="molecule type" value="Genomic_DNA"/>
</dbReference>
<dbReference type="RefSeq" id="WP_012177023.1">
    <property type="nucleotide sequence ID" value="NC_009952.1"/>
</dbReference>
<dbReference type="SMR" id="A8LMB6"/>
<dbReference type="STRING" id="398580.Dshi_0344"/>
<dbReference type="KEGG" id="dsh:Dshi_0344"/>
<dbReference type="eggNOG" id="COG0806">
    <property type="taxonomic scope" value="Bacteria"/>
</dbReference>
<dbReference type="HOGENOM" id="CLU_077636_0_1_5"/>
<dbReference type="OrthoDB" id="9788191at2"/>
<dbReference type="Proteomes" id="UP000006833">
    <property type="component" value="Chromosome"/>
</dbReference>
<dbReference type="GO" id="GO:0005737">
    <property type="term" value="C:cytoplasm"/>
    <property type="evidence" value="ECO:0007669"/>
    <property type="project" value="UniProtKB-SubCell"/>
</dbReference>
<dbReference type="GO" id="GO:0005840">
    <property type="term" value="C:ribosome"/>
    <property type="evidence" value="ECO:0007669"/>
    <property type="project" value="InterPro"/>
</dbReference>
<dbReference type="GO" id="GO:0043022">
    <property type="term" value="F:ribosome binding"/>
    <property type="evidence" value="ECO:0007669"/>
    <property type="project" value="InterPro"/>
</dbReference>
<dbReference type="GO" id="GO:0042274">
    <property type="term" value="P:ribosomal small subunit biogenesis"/>
    <property type="evidence" value="ECO:0007669"/>
    <property type="project" value="UniProtKB-UniRule"/>
</dbReference>
<dbReference type="GO" id="GO:0006364">
    <property type="term" value="P:rRNA processing"/>
    <property type="evidence" value="ECO:0007669"/>
    <property type="project" value="UniProtKB-UniRule"/>
</dbReference>
<dbReference type="Gene3D" id="2.30.30.240">
    <property type="entry name" value="PRC-barrel domain"/>
    <property type="match status" value="1"/>
</dbReference>
<dbReference type="Gene3D" id="2.40.30.60">
    <property type="entry name" value="RimM"/>
    <property type="match status" value="1"/>
</dbReference>
<dbReference type="HAMAP" id="MF_00014">
    <property type="entry name" value="Ribosome_mat_RimM"/>
    <property type="match status" value="1"/>
</dbReference>
<dbReference type="InterPro" id="IPR011033">
    <property type="entry name" value="PRC_barrel-like_sf"/>
</dbReference>
<dbReference type="InterPro" id="IPR056792">
    <property type="entry name" value="PRC_RimM"/>
</dbReference>
<dbReference type="InterPro" id="IPR011961">
    <property type="entry name" value="RimM"/>
</dbReference>
<dbReference type="InterPro" id="IPR002676">
    <property type="entry name" value="RimM_N"/>
</dbReference>
<dbReference type="InterPro" id="IPR036976">
    <property type="entry name" value="RimM_N_sf"/>
</dbReference>
<dbReference type="InterPro" id="IPR009000">
    <property type="entry name" value="Transl_B-barrel_sf"/>
</dbReference>
<dbReference type="NCBIfam" id="TIGR02273">
    <property type="entry name" value="16S_RimM"/>
    <property type="match status" value="1"/>
</dbReference>
<dbReference type="PANTHER" id="PTHR33692">
    <property type="entry name" value="RIBOSOME MATURATION FACTOR RIMM"/>
    <property type="match status" value="1"/>
</dbReference>
<dbReference type="PANTHER" id="PTHR33692:SF1">
    <property type="entry name" value="RIBOSOME MATURATION FACTOR RIMM"/>
    <property type="match status" value="1"/>
</dbReference>
<dbReference type="Pfam" id="PF24986">
    <property type="entry name" value="PRC_RimM"/>
    <property type="match status" value="1"/>
</dbReference>
<dbReference type="Pfam" id="PF01782">
    <property type="entry name" value="RimM"/>
    <property type="match status" value="1"/>
</dbReference>
<dbReference type="SUPFAM" id="SSF50346">
    <property type="entry name" value="PRC-barrel domain"/>
    <property type="match status" value="1"/>
</dbReference>
<dbReference type="SUPFAM" id="SSF50447">
    <property type="entry name" value="Translation proteins"/>
    <property type="match status" value="1"/>
</dbReference>
<keyword id="KW-0143">Chaperone</keyword>
<keyword id="KW-0963">Cytoplasm</keyword>
<keyword id="KW-1185">Reference proteome</keyword>
<keyword id="KW-0690">Ribosome biogenesis</keyword>
<keyword id="KW-0698">rRNA processing</keyword>
<proteinExistence type="inferred from homology"/>
<protein>
    <recommendedName>
        <fullName evidence="1">Ribosome maturation factor RimM</fullName>
    </recommendedName>
</protein>
<reference key="1">
    <citation type="journal article" date="2010" name="ISME J.">
        <title>The complete genome sequence of the algal symbiont Dinoroseobacter shibae: a hitchhiker's guide to life in the sea.</title>
        <authorList>
            <person name="Wagner-Dobler I."/>
            <person name="Ballhausen B."/>
            <person name="Berger M."/>
            <person name="Brinkhoff T."/>
            <person name="Buchholz I."/>
            <person name="Bunk B."/>
            <person name="Cypionka H."/>
            <person name="Daniel R."/>
            <person name="Drepper T."/>
            <person name="Gerdts G."/>
            <person name="Hahnke S."/>
            <person name="Han C."/>
            <person name="Jahn D."/>
            <person name="Kalhoefer D."/>
            <person name="Kiss H."/>
            <person name="Klenk H.P."/>
            <person name="Kyrpides N."/>
            <person name="Liebl W."/>
            <person name="Liesegang H."/>
            <person name="Meincke L."/>
            <person name="Pati A."/>
            <person name="Petersen J."/>
            <person name="Piekarski T."/>
            <person name="Pommerenke C."/>
            <person name="Pradella S."/>
            <person name="Pukall R."/>
            <person name="Rabus R."/>
            <person name="Stackebrandt E."/>
            <person name="Thole S."/>
            <person name="Thompson L."/>
            <person name="Tielen P."/>
            <person name="Tomasch J."/>
            <person name="von Jan M."/>
            <person name="Wanphrut N."/>
            <person name="Wichels A."/>
            <person name="Zech H."/>
            <person name="Simon M."/>
        </authorList>
    </citation>
    <scope>NUCLEOTIDE SEQUENCE [LARGE SCALE GENOMIC DNA]</scope>
    <source>
        <strain>DSM 16493 / NCIMB 14021 / DFL 12</strain>
    </source>
</reference>
<accession>A8LMB6</accession>
<gene>
    <name evidence="1" type="primary">rimM</name>
    <name type="ordered locus">Dshi_0344</name>
</gene>
<organism>
    <name type="scientific">Dinoroseobacter shibae (strain DSM 16493 / NCIMB 14021 / DFL 12)</name>
    <dbReference type="NCBI Taxonomy" id="398580"/>
    <lineage>
        <taxon>Bacteria</taxon>
        <taxon>Pseudomonadati</taxon>
        <taxon>Pseudomonadota</taxon>
        <taxon>Alphaproteobacteria</taxon>
        <taxon>Rhodobacterales</taxon>
        <taxon>Roseobacteraceae</taxon>
        <taxon>Dinoroseobacter</taxon>
    </lineage>
</organism>
<evidence type="ECO:0000255" key="1">
    <source>
        <dbReference type="HAMAP-Rule" id="MF_00014"/>
    </source>
</evidence>